<name>IRAD_SHIBS</name>
<feature type="chain" id="PRO_0000337902" description="Anti-adapter protein IraD">
    <location>
        <begin position="1"/>
        <end position="130"/>
    </location>
</feature>
<evidence type="ECO:0000255" key="1">
    <source>
        <dbReference type="HAMAP-Rule" id="MF_02010"/>
    </source>
</evidence>
<evidence type="ECO:0000305" key="2"/>
<comment type="function">
    <text evidence="1">Inhibits RpoS proteolysis by regulating RssB activity, thereby increasing the stability of the sigma stress factor RpoS during oxidative stress. Its effect on RpoS stability is due to its interaction with RssB, which probably blocks the interaction of RssB with RpoS, and the consequent delivery of the RssB-RpoS complex to the ClpXP protein degradation pathway.</text>
</comment>
<comment type="subunit">
    <text evidence="1">Interacts with RssB.</text>
</comment>
<comment type="subcellular location">
    <subcellularLocation>
        <location evidence="1">Cytoplasm</location>
    </subcellularLocation>
</comment>
<comment type="similarity">
    <text evidence="1">Belongs to the GpW/Gp25 family. IraD subfamily.</text>
</comment>
<comment type="sequence caution" evidence="2">
    <conflict type="erroneous initiation">
        <sequence resource="EMBL-CDS" id="ABB68792"/>
    </conflict>
</comment>
<reference key="1">
    <citation type="journal article" date="2005" name="Nucleic Acids Res.">
        <title>Genome dynamics and diversity of Shigella species, the etiologic agents of bacillary dysentery.</title>
        <authorList>
            <person name="Yang F."/>
            <person name="Yang J."/>
            <person name="Zhang X."/>
            <person name="Chen L."/>
            <person name="Jiang Y."/>
            <person name="Yan Y."/>
            <person name="Tang X."/>
            <person name="Wang J."/>
            <person name="Xiong Z."/>
            <person name="Dong J."/>
            <person name="Xue Y."/>
            <person name="Zhu Y."/>
            <person name="Xu X."/>
            <person name="Sun L."/>
            <person name="Chen S."/>
            <person name="Nie H."/>
            <person name="Peng J."/>
            <person name="Xu J."/>
            <person name="Wang Y."/>
            <person name="Yuan Z."/>
            <person name="Wen Y."/>
            <person name="Yao Z."/>
            <person name="Shen Y."/>
            <person name="Qiang B."/>
            <person name="Hou Y."/>
            <person name="Yu J."/>
            <person name="Jin Q."/>
        </authorList>
    </citation>
    <scope>NUCLEOTIDE SEQUENCE [LARGE SCALE GENOMIC DNA]</scope>
    <source>
        <strain>Sb227</strain>
    </source>
</reference>
<protein>
    <recommendedName>
        <fullName evidence="1">Anti-adapter protein IraD</fullName>
    </recommendedName>
</protein>
<keyword id="KW-0963">Cytoplasm</keyword>
<keyword id="KW-0346">Stress response</keyword>
<dbReference type="EMBL" id="CP000036">
    <property type="protein sequence ID" value="ABB68792.1"/>
    <property type="status" value="ALT_INIT"/>
    <property type="molecule type" value="Genomic_DNA"/>
</dbReference>
<dbReference type="RefSeq" id="WP_000986206.1">
    <property type="nucleotide sequence ID" value="NC_007613.1"/>
</dbReference>
<dbReference type="SMR" id="Q31T16"/>
<dbReference type="KEGG" id="sbo:SBO_4377"/>
<dbReference type="HOGENOM" id="CLU_1977621_0_0_6"/>
<dbReference type="Proteomes" id="UP000007067">
    <property type="component" value="Chromosome"/>
</dbReference>
<dbReference type="GO" id="GO:0005737">
    <property type="term" value="C:cytoplasm"/>
    <property type="evidence" value="ECO:0007669"/>
    <property type="project" value="UniProtKB-SubCell"/>
</dbReference>
<dbReference type="GO" id="GO:0043856">
    <property type="term" value="F:anti-sigma factor antagonist activity"/>
    <property type="evidence" value="ECO:0007669"/>
    <property type="project" value="InterPro"/>
</dbReference>
<dbReference type="GO" id="GO:0034599">
    <property type="term" value="P:cellular response to oxidative stress"/>
    <property type="evidence" value="ECO:0007669"/>
    <property type="project" value="UniProtKB-UniRule"/>
</dbReference>
<dbReference type="GO" id="GO:0006974">
    <property type="term" value="P:DNA damage response"/>
    <property type="evidence" value="ECO:0007669"/>
    <property type="project" value="InterPro"/>
</dbReference>
<dbReference type="HAMAP" id="MF_02010">
    <property type="entry name" value="IraD"/>
    <property type="match status" value="1"/>
</dbReference>
<dbReference type="InterPro" id="IPR023776">
    <property type="entry name" value="Anti-adapt_IraD"/>
</dbReference>
<dbReference type="InterPro" id="IPR007048">
    <property type="entry name" value="IraD/Gp25-like"/>
</dbReference>
<dbReference type="NCBIfam" id="NF010726">
    <property type="entry name" value="PRK14128.1-1"/>
    <property type="match status" value="1"/>
</dbReference>
<dbReference type="NCBIfam" id="NF010728">
    <property type="entry name" value="PRK14128.1-3"/>
    <property type="match status" value="1"/>
</dbReference>
<dbReference type="Pfam" id="PF04965">
    <property type="entry name" value="GPW_gp25"/>
    <property type="match status" value="1"/>
</dbReference>
<dbReference type="SUPFAM" id="SSF160719">
    <property type="entry name" value="gpW/gp25-like"/>
    <property type="match status" value="1"/>
</dbReference>
<proteinExistence type="inferred from homology"/>
<gene>
    <name evidence="1" type="primary">iraD</name>
    <name type="ordered locus">SBO_4377</name>
</gene>
<sequence>MMRQSLQAVLPEISGNKTSLLRKSVCSDLLTLFNSPHSALPSLLVSGMPEWQVHNPSDKHLQSWYCRQLRSALLFHEPRIAALQVNLKEAYCHTLAISLEIMLYHDDEPLTFDLVWDNGGWRSATLENVS</sequence>
<organism>
    <name type="scientific">Shigella boydii serotype 4 (strain Sb227)</name>
    <dbReference type="NCBI Taxonomy" id="300268"/>
    <lineage>
        <taxon>Bacteria</taxon>
        <taxon>Pseudomonadati</taxon>
        <taxon>Pseudomonadota</taxon>
        <taxon>Gammaproteobacteria</taxon>
        <taxon>Enterobacterales</taxon>
        <taxon>Enterobacteriaceae</taxon>
        <taxon>Shigella</taxon>
    </lineage>
</organism>
<accession>Q31T16</accession>